<organism>
    <name type="scientific">Carassius auratus</name>
    <name type="common">Goldfish</name>
    <dbReference type="NCBI Taxonomy" id="7957"/>
    <lineage>
        <taxon>Eukaryota</taxon>
        <taxon>Metazoa</taxon>
        <taxon>Chordata</taxon>
        <taxon>Craniata</taxon>
        <taxon>Vertebrata</taxon>
        <taxon>Euteleostomi</taxon>
        <taxon>Actinopterygii</taxon>
        <taxon>Neopterygii</taxon>
        <taxon>Teleostei</taxon>
        <taxon>Ostariophysi</taxon>
        <taxon>Cypriniformes</taxon>
        <taxon>Cyprinidae</taxon>
        <taxon>Cyprininae</taxon>
        <taxon>Carassius</taxon>
    </lineage>
</organism>
<reference key="1">
    <citation type="journal article" date="1996" name="Arch. Biochem. Biophys.">
        <title>Isolation and characterization of two distinct growth hormone cDNAs from the goldfish, Carassius auratus.</title>
        <authorList>
            <person name="Law M.S."/>
            <person name="Cheng K.W."/>
            <person name="Fung T.K."/>
            <person name="Chan Y.H."/>
            <person name="Yu K.L."/>
            <person name="Chan K.M."/>
        </authorList>
    </citation>
    <scope>NUCLEOTIDE SEQUENCE [MRNA]</scope>
</reference>
<feature type="signal peptide" evidence="1">
    <location>
        <begin position="1"/>
        <end position="22"/>
    </location>
</feature>
<feature type="chain" id="PRO_0000033014" description="Somatotropin-1">
    <location>
        <begin position="23"/>
        <end position="210"/>
    </location>
</feature>
<feature type="binding site" evidence="1">
    <location>
        <position position="38"/>
    </location>
    <ligand>
        <name>Zn(2+)</name>
        <dbReference type="ChEBI" id="CHEBI:29105"/>
    </ligand>
</feature>
<feature type="binding site" evidence="1">
    <location>
        <position position="192"/>
    </location>
    <ligand>
        <name>Zn(2+)</name>
        <dbReference type="ChEBI" id="CHEBI:29105"/>
    </ligand>
</feature>
<feature type="disulfide bond" evidence="1">
    <location>
        <begin position="71"/>
        <end position="183"/>
    </location>
</feature>
<feature type="disulfide bond" evidence="1">
    <location>
        <begin position="200"/>
        <end position="208"/>
    </location>
</feature>
<comment type="function">
    <text>Growth hormone plays an important role in growth control and is involved in the regulation of several anabolic processes. Implicated as an osmoregulatory substance important for seawater adaptation.</text>
</comment>
<comment type="subcellular location">
    <subcellularLocation>
        <location>Secreted</location>
    </subcellularLocation>
</comment>
<comment type="similarity">
    <text evidence="2">Belongs to the somatotropin/prolactin family.</text>
</comment>
<dbReference type="EMBL" id="AF069398">
    <property type="protein sequence ID" value="AAC19389.1"/>
    <property type="molecule type" value="mRNA"/>
</dbReference>
<dbReference type="PIR" id="S69262">
    <property type="entry name" value="S69262"/>
</dbReference>
<dbReference type="SMR" id="O93359"/>
<dbReference type="OrthoDB" id="9925773at2759"/>
<dbReference type="Proteomes" id="UP000515129">
    <property type="component" value="Unplaced"/>
</dbReference>
<dbReference type="GO" id="GO:0005615">
    <property type="term" value="C:extracellular space"/>
    <property type="evidence" value="ECO:0007669"/>
    <property type="project" value="InterPro"/>
</dbReference>
<dbReference type="GO" id="GO:0070186">
    <property type="term" value="F:growth hormone activity"/>
    <property type="evidence" value="ECO:0007669"/>
    <property type="project" value="TreeGrafter"/>
</dbReference>
<dbReference type="GO" id="GO:0005131">
    <property type="term" value="F:growth hormone receptor binding"/>
    <property type="evidence" value="ECO:0007669"/>
    <property type="project" value="InterPro"/>
</dbReference>
<dbReference type="GO" id="GO:0046872">
    <property type="term" value="F:metal ion binding"/>
    <property type="evidence" value="ECO:0007669"/>
    <property type="project" value="UniProtKB-KW"/>
</dbReference>
<dbReference type="GO" id="GO:0048513">
    <property type="term" value="P:animal organ development"/>
    <property type="evidence" value="ECO:0007669"/>
    <property type="project" value="TreeGrafter"/>
</dbReference>
<dbReference type="GO" id="GO:0060396">
    <property type="term" value="P:growth hormone receptor signaling pathway"/>
    <property type="evidence" value="ECO:0007669"/>
    <property type="project" value="TreeGrafter"/>
</dbReference>
<dbReference type="GO" id="GO:0045927">
    <property type="term" value="P:positive regulation of growth"/>
    <property type="evidence" value="ECO:0007669"/>
    <property type="project" value="TreeGrafter"/>
</dbReference>
<dbReference type="GO" id="GO:0046427">
    <property type="term" value="P:positive regulation of receptor signaling pathway via JAK-STAT"/>
    <property type="evidence" value="ECO:0007669"/>
    <property type="project" value="TreeGrafter"/>
</dbReference>
<dbReference type="GO" id="GO:0031667">
    <property type="term" value="P:response to nutrient levels"/>
    <property type="evidence" value="ECO:0007669"/>
    <property type="project" value="TreeGrafter"/>
</dbReference>
<dbReference type="CDD" id="cd10285">
    <property type="entry name" value="somatotropin_like"/>
    <property type="match status" value="1"/>
</dbReference>
<dbReference type="FunFam" id="1.20.1250.10:FF:000009">
    <property type="entry name" value="Growth hormone"/>
    <property type="match status" value="1"/>
</dbReference>
<dbReference type="Gene3D" id="1.20.1250.10">
    <property type="match status" value="1"/>
</dbReference>
<dbReference type="InterPro" id="IPR009079">
    <property type="entry name" value="4_helix_cytokine-like_core"/>
</dbReference>
<dbReference type="InterPro" id="IPR034975">
    <property type="entry name" value="Somatotropin"/>
</dbReference>
<dbReference type="InterPro" id="IPR001400">
    <property type="entry name" value="Somatotropin/Prolactin"/>
</dbReference>
<dbReference type="InterPro" id="IPR018116">
    <property type="entry name" value="Somatotropin_CS"/>
</dbReference>
<dbReference type="PANTHER" id="PTHR11417:SF2">
    <property type="entry name" value="SOMATOTROPIN"/>
    <property type="match status" value="1"/>
</dbReference>
<dbReference type="PANTHER" id="PTHR11417">
    <property type="entry name" value="SOMATOTROPIN,PROLACTIN"/>
    <property type="match status" value="1"/>
</dbReference>
<dbReference type="Pfam" id="PF00103">
    <property type="entry name" value="Hormone_1"/>
    <property type="match status" value="1"/>
</dbReference>
<dbReference type="PRINTS" id="PR00836">
    <property type="entry name" value="SOMATOTROPIN"/>
</dbReference>
<dbReference type="SUPFAM" id="SSF47266">
    <property type="entry name" value="4-helical cytokines"/>
    <property type="match status" value="1"/>
</dbReference>
<dbReference type="PROSITE" id="PS00266">
    <property type="entry name" value="SOMATOTROPIN_1"/>
    <property type="match status" value="1"/>
</dbReference>
<dbReference type="PROSITE" id="PS00338">
    <property type="entry name" value="SOMATOTROPIN_2"/>
    <property type="match status" value="1"/>
</dbReference>
<proteinExistence type="evidence at transcript level"/>
<keyword id="KW-1015">Disulfide bond</keyword>
<keyword id="KW-0372">Hormone</keyword>
<keyword id="KW-0479">Metal-binding</keyword>
<keyword id="KW-1185">Reference proteome</keyword>
<keyword id="KW-0964">Secreted</keyword>
<keyword id="KW-0732">Signal</keyword>
<keyword id="KW-0862">Zinc</keyword>
<name>SOMA1_CARAU</name>
<protein>
    <recommendedName>
        <fullName>Somatotropin-1</fullName>
    </recommendedName>
    <alternativeName>
        <fullName>Growth hormone I</fullName>
    </alternativeName>
    <alternativeName>
        <fullName>Somatotropin I</fullName>
    </alternativeName>
</protein>
<accession>O93359</accession>
<evidence type="ECO:0000250" key="1"/>
<evidence type="ECO:0000305" key="2"/>
<sequence>MARALVLLSVVLVSLLVNQGRASDNQRLFNNAVIRVQHLHQLAAKMINDFEDSLLPEERRQLSKIFPLSFCNSDYIEAPTGKDETQKSSMLKLLRVSFRLIESWEFPSQTLSGTVSNSLTVGNPNQITEKLADLKMGISVLIQACLDGQPNMDDNDSLPLPFEEFYLTMGDNSLRESFRLLACFKKDMHKVETYLRVANCRRSLDSNCTL</sequence>
<gene>
    <name type="primary">gh1</name>
</gene>